<feature type="chain" id="PRO_0000145761" description="Phosphoenolpyruvate transferase">
    <location>
        <begin position="1"/>
        <end position="333"/>
    </location>
</feature>
<feature type="binding site" evidence="1">
    <location>
        <position position="65"/>
    </location>
    <ligand>
        <name>7,8-didemethyl-8-hydroxy-5-deazariboflavin</name>
        <dbReference type="ChEBI" id="CHEBI:59904"/>
    </ligand>
</feature>
<keyword id="KW-0460">Magnesium</keyword>
<keyword id="KW-1185">Reference proteome</keyword>
<keyword id="KW-0808">Transferase</keyword>
<gene>
    <name evidence="1" type="primary">fbiA</name>
    <name type="ordered locus">ML0759</name>
</gene>
<organism>
    <name type="scientific">Mycobacterium leprae (strain TN)</name>
    <dbReference type="NCBI Taxonomy" id="272631"/>
    <lineage>
        <taxon>Bacteria</taxon>
        <taxon>Bacillati</taxon>
        <taxon>Actinomycetota</taxon>
        <taxon>Actinomycetes</taxon>
        <taxon>Mycobacteriales</taxon>
        <taxon>Mycobacteriaceae</taxon>
        <taxon>Mycobacterium</taxon>
    </lineage>
</organism>
<comment type="function">
    <text evidence="1">Catalyzes the transfer of the phosphoenolpyruvate moiety from enoylpyruvoyl-2-diphospho-5'-guanosine (EPPG) to 7,8-didemethyl-8-hydroxy-5-deazariboflavin (FO) with the formation of dehydro coenzyme F420-0 and GMP.</text>
</comment>
<comment type="catalytic activity">
    <reaction evidence="1">
        <text>enolpyruvoyl-2-diphospho-5'-guanosine + 7,8-didemethyl-8-hydroxy-5-deazariboflavin = dehydro coenzyme F420-0 + GMP + H(+)</text>
        <dbReference type="Rhea" id="RHEA:27510"/>
        <dbReference type="ChEBI" id="CHEBI:15378"/>
        <dbReference type="ChEBI" id="CHEBI:58115"/>
        <dbReference type="ChEBI" id="CHEBI:59904"/>
        <dbReference type="ChEBI" id="CHEBI:143701"/>
        <dbReference type="ChEBI" id="CHEBI:143705"/>
        <dbReference type="EC" id="2.7.8.28"/>
    </reaction>
</comment>
<comment type="cofactor">
    <cofactor evidence="1">
        <name>Mg(2+)</name>
        <dbReference type="ChEBI" id="CHEBI:18420"/>
    </cofactor>
</comment>
<comment type="pathway">
    <text evidence="1">Cofactor biosynthesis; coenzyme F420 biosynthesis.</text>
</comment>
<comment type="subunit">
    <text evidence="1">Homodimer.</text>
</comment>
<comment type="similarity">
    <text evidence="1">Belongs to the CofD family.</text>
</comment>
<comment type="sequence caution" evidence="2">
    <conflict type="erroneous initiation">
        <sequence resource="EMBL-CDS" id="CAC30268"/>
    </conflict>
</comment>
<reference key="1">
    <citation type="journal article" date="2001" name="Nature">
        <title>Massive gene decay in the leprosy bacillus.</title>
        <authorList>
            <person name="Cole S.T."/>
            <person name="Eiglmeier K."/>
            <person name="Parkhill J."/>
            <person name="James K.D."/>
            <person name="Thomson N.R."/>
            <person name="Wheeler P.R."/>
            <person name="Honore N."/>
            <person name="Garnier T."/>
            <person name="Churcher C.M."/>
            <person name="Harris D.E."/>
            <person name="Mungall K.L."/>
            <person name="Basham D."/>
            <person name="Brown D."/>
            <person name="Chillingworth T."/>
            <person name="Connor R."/>
            <person name="Davies R.M."/>
            <person name="Devlin K."/>
            <person name="Duthoy S."/>
            <person name="Feltwell T."/>
            <person name="Fraser A."/>
            <person name="Hamlin N."/>
            <person name="Holroyd S."/>
            <person name="Hornsby T."/>
            <person name="Jagels K."/>
            <person name="Lacroix C."/>
            <person name="Maclean J."/>
            <person name="Moule S."/>
            <person name="Murphy L.D."/>
            <person name="Oliver K."/>
            <person name="Quail M.A."/>
            <person name="Rajandream M.A."/>
            <person name="Rutherford K.M."/>
            <person name="Rutter S."/>
            <person name="Seeger K."/>
            <person name="Simon S."/>
            <person name="Simmonds M."/>
            <person name="Skelton J."/>
            <person name="Squares R."/>
            <person name="Squares S."/>
            <person name="Stevens K."/>
            <person name="Taylor K."/>
            <person name="Whitehead S."/>
            <person name="Woodward J.R."/>
            <person name="Barrell B.G."/>
        </authorList>
    </citation>
    <scope>NUCLEOTIDE SEQUENCE [LARGE SCALE GENOMIC DNA]</scope>
    <source>
        <strain>TN</strain>
    </source>
</reference>
<evidence type="ECO:0000255" key="1">
    <source>
        <dbReference type="HAMAP-Rule" id="MF_01257"/>
    </source>
</evidence>
<evidence type="ECO:0000305" key="2"/>
<sequence length="333" mass="35850">MRVTVLVGGVGGAHFLLGVQQLLGLGQFGPQQCPDTLTTGHELTAVVNIGDDAWIHGLRVCPDLDTCMYTLGDGIDPQRGWGHRDETWHAKEELARYGVQPDWFELGDRDLATHLVRTQMLNAGYRLSQITTALCDRWQPGARLVPASDDRCETHVVITDPINDSRRAIHFQEWWVRYRAQVPTHSFAYVGAEKASAATEAVAAIADADVILVAPSNPVVSIGAILAIPGIRGALRTTTAPVVGYSPIIDGKPLRGMADKCLTVIGVQSTATAVGQHYGARRTTGILDCWLVHEDDHAEIEGVAVRSIPLLMSSPKTTADMVNIGLQLAGVSA</sequence>
<dbReference type="EC" id="2.7.8.28" evidence="1"/>
<dbReference type="EMBL" id="AL583919">
    <property type="protein sequence ID" value="CAC30268.1"/>
    <property type="status" value="ALT_INIT"/>
    <property type="molecule type" value="Genomic_DNA"/>
</dbReference>
<dbReference type="PIR" id="H87003">
    <property type="entry name" value="H87003"/>
</dbReference>
<dbReference type="SMR" id="Q9CCK1"/>
<dbReference type="STRING" id="272631.gene:17574583"/>
<dbReference type="KEGG" id="mle:ML0759"/>
<dbReference type="Leproma" id="ML0759"/>
<dbReference type="eggNOG" id="COG0391">
    <property type="taxonomic scope" value="Bacteria"/>
</dbReference>
<dbReference type="HOGENOM" id="CLU_055795_0_0_11"/>
<dbReference type="UniPathway" id="UPA00071"/>
<dbReference type="Proteomes" id="UP000000806">
    <property type="component" value="Chromosome"/>
</dbReference>
<dbReference type="GO" id="GO:0043743">
    <property type="term" value="F:LPPG:FO 2-phospho-L-lactate transferase activity"/>
    <property type="evidence" value="ECO:0007669"/>
    <property type="project" value="UniProtKB-EC"/>
</dbReference>
<dbReference type="GO" id="GO:0000287">
    <property type="term" value="F:magnesium ion binding"/>
    <property type="evidence" value="ECO:0007669"/>
    <property type="project" value="InterPro"/>
</dbReference>
<dbReference type="GO" id="GO:0052645">
    <property type="term" value="P:F420-0 metabolic process"/>
    <property type="evidence" value="ECO:0007669"/>
    <property type="project" value="UniProtKB-UniRule"/>
</dbReference>
<dbReference type="FunFam" id="1.10.8.240:FF:000001">
    <property type="entry name" value="2-phospho-L-lactate transferase"/>
    <property type="match status" value="1"/>
</dbReference>
<dbReference type="Gene3D" id="1.10.8.240">
    <property type="entry name" value="CofD-like domain"/>
    <property type="match status" value="1"/>
</dbReference>
<dbReference type="Gene3D" id="3.40.50.10680">
    <property type="entry name" value="CofD-like domains"/>
    <property type="match status" value="1"/>
</dbReference>
<dbReference type="HAMAP" id="MF_01257">
    <property type="entry name" value="CofD"/>
    <property type="match status" value="1"/>
</dbReference>
<dbReference type="InterPro" id="IPR002882">
    <property type="entry name" value="CofD"/>
</dbReference>
<dbReference type="InterPro" id="IPR038136">
    <property type="entry name" value="CofD-like_dom_sf"/>
</dbReference>
<dbReference type="InterPro" id="IPR010115">
    <property type="entry name" value="FbiA/CofD"/>
</dbReference>
<dbReference type="NCBIfam" id="TIGR01819">
    <property type="entry name" value="F420_cofD"/>
    <property type="match status" value="1"/>
</dbReference>
<dbReference type="PANTHER" id="PTHR43007">
    <property type="entry name" value="2-PHOSPHO-L-LACTATE TRANSFERASE"/>
    <property type="match status" value="1"/>
</dbReference>
<dbReference type="PANTHER" id="PTHR43007:SF1">
    <property type="entry name" value="2-PHOSPHO-L-LACTATE TRANSFERASE"/>
    <property type="match status" value="1"/>
</dbReference>
<dbReference type="Pfam" id="PF01933">
    <property type="entry name" value="CofD"/>
    <property type="match status" value="1"/>
</dbReference>
<dbReference type="SUPFAM" id="SSF142338">
    <property type="entry name" value="CofD-like"/>
    <property type="match status" value="1"/>
</dbReference>
<name>FBIA_MYCLE</name>
<protein>
    <recommendedName>
        <fullName evidence="1">Phosphoenolpyruvate transferase</fullName>
        <ecNumber evidence="1">2.7.8.28</ecNumber>
    </recommendedName>
    <alternativeName>
        <fullName evidence="1">EPPG:FO PEP transferase</fullName>
    </alternativeName>
</protein>
<accession>Q9CCK1</accession>
<proteinExistence type="inferred from homology"/>